<proteinExistence type="inferred from homology"/>
<sequence>MAPKKKVAGLIKLQIVAGQANPAPPVGPALGQHGVNIMEFCKAYNAATENQRGNVIPVEITVYEDRSFTFTLKTPPAAKLLLKAAGVAKGSAEPHKTKVAKVTWDQVREIAETKKTDLNANDVDAAAKIIAGTARSMGITVE</sequence>
<keyword id="KW-0488">Methylation</keyword>
<keyword id="KW-1185">Reference proteome</keyword>
<keyword id="KW-0687">Ribonucleoprotein</keyword>
<keyword id="KW-0689">Ribosomal protein</keyword>
<keyword id="KW-0694">RNA-binding</keyword>
<keyword id="KW-0699">rRNA-binding</keyword>
<name>RL11_MYCTA</name>
<accession>A5U025</accession>
<gene>
    <name evidence="1" type="primary">rplK</name>
    <name type="ordered locus">MRA_0651</name>
</gene>
<feature type="chain" id="PRO_1000046224" description="Large ribosomal subunit protein uL11">
    <location>
        <begin position="1"/>
        <end position="142"/>
    </location>
</feature>
<evidence type="ECO:0000255" key="1">
    <source>
        <dbReference type="HAMAP-Rule" id="MF_00736"/>
    </source>
</evidence>
<evidence type="ECO:0000305" key="2"/>
<comment type="function">
    <text evidence="1">Forms part of the ribosomal stalk which helps the ribosome interact with GTP-bound translation factors.</text>
</comment>
<comment type="subunit">
    <text evidence="1">Part of the ribosomal stalk of the 50S ribosomal subunit. Interacts with L10 and the large rRNA to form the base of the stalk. L10 forms an elongated spine to which L12 dimers bind in a sequential fashion forming a multimeric L10(L12)X complex.</text>
</comment>
<comment type="PTM">
    <text evidence="1">One or more lysine residues are methylated.</text>
</comment>
<comment type="similarity">
    <text evidence="1">Belongs to the universal ribosomal protein uL11 family.</text>
</comment>
<dbReference type="EMBL" id="CP000611">
    <property type="protein sequence ID" value="ABQ72375.1"/>
    <property type="molecule type" value="Genomic_DNA"/>
</dbReference>
<dbReference type="RefSeq" id="WP_003403291.1">
    <property type="nucleotide sequence ID" value="NZ_CP016972.1"/>
</dbReference>
<dbReference type="SMR" id="A5U025"/>
<dbReference type="GeneID" id="45424600"/>
<dbReference type="KEGG" id="mra:MRA_0651"/>
<dbReference type="eggNOG" id="COG0080">
    <property type="taxonomic scope" value="Bacteria"/>
</dbReference>
<dbReference type="HOGENOM" id="CLU_074237_2_1_11"/>
<dbReference type="Proteomes" id="UP000001988">
    <property type="component" value="Chromosome"/>
</dbReference>
<dbReference type="GO" id="GO:0022625">
    <property type="term" value="C:cytosolic large ribosomal subunit"/>
    <property type="evidence" value="ECO:0007669"/>
    <property type="project" value="TreeGrafter"/>
</dbReference>
<dbReference type="GO" id="GO:0070180">
    <property type="term" value="F:large ribosomal subunit rRNA binding"/>
    <property type="evidence" value="ECO:0007669"/>
    <property type="project" value="UniProtKB-UniRule"/>
</dbReference>
<dbReference type="GO" id="GO:0003735">
    <property type="term" value="F:structural constituent of ribosome"/>
    <property type="evidence" value="ECO:0007669"/>
    <property type="project" value="InterPro"/>
</dbReference>
<dbReference type="GO" id="GO:0006412">
    <property type="term" value="P:translation"/>
    <property type="evidence" value="ECO:0007669"/>
    <property type="project" value="UniProtKB-UniRule"/>
</dbReference>
<dbReference type="CDD" id="cd00349">
    <property type="entry name" value="Ribosomal_L11"/>
    <property type="match status" value="1"/>
</dbReference>
<dbReference type="FunFam" id="1.10.10.250:FF:000001">
    <property type="entry name" value="50S ribosomal protein L11"/>
    <property type="match status" value="1"/>
</dbReference>
<dbReference type="FunFam" id="3.30.1550.10:FF:000001">
    <property type="entry name" value="50S ribosomal protein L11"/>
    <property type="match status" value="1"/>
</dbReference>
<dbReference type="Gene3D" id="1.10.10.250">
    <property type="entry name" value="Ribosomal protein L11, C-terminal domain"/>
    <property type="match status" value="1"/>
</dbReference>
<dbReference type="Gene3D" id="3.30.1550.10">
    <property type="entry name" value="Ribosomal protein L11/L12, N-terminal domain"/>
    <property type="match status" value="1"/>
</dbReference>
<dbReference type="HAMAP" id="MF_00736">
    <property type="entry name" value="Ribosomal_uL11"/>
    <property type="match status" value="1"/>
</dbReference>
<dbReference type="InterPro" id="IPR000911">
    <property type="entry name" value="Ribosomal_uL11"/>
</dbReference>
<dbReference type="InterPro" id="IPR006519">
    <property type="entry name" value="Ribosomal_uL11_bac-typ"/>
</dbReference>
<dbReference type="InterPro" id="IPR020783">
    <property type="entry name" value="Ribosomal_uL11_C"/>
</dbReference>
<dbReference type="InterPro" id="IPR036769">
    <property type="entry name" value="Ribosomal_uL11_C_sf"/>
</dbReference>
<dbReference type="InterPro" id="IPR020785">
    <property type="entry name" value="Ribosomal_uL11_CS"/>
</dbReference>
<dbReference type="InterPro" id="IPR020784">
    <property type="entry name" value="Ribosomal_uL11_N"/>
</dbReference>
<dbReference type="InterPro" id="IPR036796">
    <property type="entry name" value="Ribosomal_uL11_N_sf"/>
</dbReference>
<dbReference type="NCBIfam" id="TIGR01632">
    <property type="entry name" value="L11_bact"/>
    <property type="match status" value="1"/>
</dbReference>
<dbReference type="PANTHER" id="PTHR11661">
    <property type="entry name" value="60S RIBOSOMAL PROTEIN L12"/>
    <property type="match status" value="1"/>
</dbReference>
<dbReference type="PANTHER" id="PTHR11661:SF1">
    <property type="entry name" value="LARGE RIBOSOMAL SUBUNIT PROTEIN UL11M"/>
    <property type="match status" value="1"/>
</dbReference>
<dbReference type="Pfam" id="PF00298">
    <property type="entry name" value="Ribosomal_L11"/>
    <property type="match status" value="1"/>
</dbReference>
<dbReference type="Pfam" id="PF03946">
    <property type="entry name" value="Ribosomal_L11_N"/>
    <property type="match status" value="1"/>
</dbReference>
<dbReference type="SMART" id="SM00649">
    <property type="entry name" value="RL11"/>
    <property type="match status" value="1"/>
</dbReference>
<dbReference type="SUPFAM" id="SSF54747">
    <property type="entry name" value="Ribosomal L11/L12e N-terminal domain"/>
    <property type="match status" value="1"/>
</dbReference>
<dbReference type="SUPFAM" id="SSF46906">
    <property type="entry name" value="Ribosomal protein L11, C-terminal domain"/>
    <property type="match status" value="1"/>
</dbReference>
<dbReference type="PROSITE" id="PS00359">
    <property type="entry name" value="RIBOSOMAL_L11"/>
    <property type="match status" value="1"/>
</dbReference>
<reference key="1">
    <citation type="journal article" date="2008" name="PLoS ONE">
        <title>Genetic basis of virulence attenuation revealed by comparative genomic analysis of Mycobacterium tuberculosis strain H37Ra versus H37Rv.</title>
        <authorList>
            <person name="Zheng H."/>
            <person name="Lu L."/>
            <person name="Wang B."/>
            <person name="Pu S."/>
            <person name="Zhang X."/>
            <person name="Zhu G."/>
            <person name="Shi W."/>
            <person name="Zhang L."/>
            <person name="Wang H."/>
            <person name="Wang S."/>
            <person name="Zhao G."/>
            <person name="Zhang Y."/>
        </authorList>
    </citation>
    <scope>NUCLEOTIDE SEQUENCE [LARGE SCALE GENOMIC DNA]</scope>
    <source>
        <strain>ATCC 25177 / H37Ra</strain>
    </source>
</reference>
<organism>
    <name type="scientific">Mycobacterium tuberculosis (strain ATCC 25177 / H37Ra)</name>
    <dbReference type="NCBI Taxonomy" id="419947"/>
    <lineage>
        <taxon>Bacteria</taxon>
        <taxon>Bacillati</taxon>
        <taxon>Actinomycetota</taxon>
        <taxon>Actinomycetes</taxon>
        <taxon>Mycobacteriales</taxon>
        <taxon>Mycobacteriaceae</taxon>
        <taxon>Mycobacterium</taxon>
        <taxon>Mycobacterium tuberculosis complex</taxon>
    </lineage>
</organism>
<protein>
    <recommendedName>
        <fullName evidence="1">Large ribosomal subunit protein uL11</fullName>
    </recommendedName>
    <alternativeName>
        <fullName evidence="2">50S ribosomal protein L11</fullName>
    </alternativeName>
</protein>